<dbReference type="EMBL" id="CP000362">
    <property type="protein sequence ID" value="ABG32556.1"/>
    <property type="molecule type" value="Genomic_DNA"/>
</dbReference>
<dbReference type="RefSeq" id="WP_011569172.1">
    <property type="nucleotide sequence ID" value="NC_008209.1"/>
</dbReference>
<dbReference type="SMR" id="Q164N7"/>
<dbReference type="STRING" id="375451.RD1_3043"/>
<dbReference type="KEGG" id="rde:RD1_3043"/>
<dbReference type="eggNOG" id="COG0360">
    <property type="taxonomic scope" value="Bacteria"/>
</dbReference>
<dbReference type="HOGENOM" id="CLU_113441_2_0_5"/>
<dbReference type="OrthoDB" id="9812702at2"/>
<dbReference type="Proteomes" id="UP000007029">
    <property type="component" value="Chromosome"/>
</dbReference>
<dbReference type="GO" id="GO:0022627">
    <property type="term" value="C:cytosolic small ribosomal subunit"/>
    <property type="evidence" value="ECO:0007669"/>
    <property type="project" value="TreeGrafter"/>
</dbReference>
<dbReference type="GO" id="GO:0070181">
    <property type="term" value="F:small ribosomal subunit rRNA binding"/>
    <property type="evidence" value="ECO:0007669"/>
    <property type="project" value="TreeGrafter"/>
</dbReference>
<dbReference type="GO" id="GO:0003735">
    <property type="term" value="F:structural constituent of ribosome"/>
    <property type="evidence" value="ECO:0007669"/>
    <property type="project" value="InterPro"/>
</dbReference>
<dbReference type="GO" id="GO:0006412">
    <property type="term" value="P:translation"/>
    <property type="evidence" value="ECO:0007669"/>
    <property type="project" value="UniProtKB-UniRule"/>
</dbReference>
<dbReference type="CDD" id="cd00473">
    <property type="entry name" value="bS6"/>
    <property type="match status" value="1"/>
</dbReference>
<dbReference type="Gene3D" id="3.30.70.60">
    <property type="match status" value="1"/>
</dbReference>
<dbReference type="HAMAP" id="MF_00360">
    <property type="entry name" value="Ribosomal_bS6"/>
    <property type="match status" value="1"/>
</dbReference>
<dbReference type="InterPro" id="IPR000529">
    <property type="entry name" value="Ribosomal_bS6"/>
</dbReference>
<dbReference type="InterPro" id="IPR035980">
    <property type="entry name" value="Ribosomal_bS6_sf"/>
</dbReference>
<dbReference type="InterPro" id="IPR020814">
    <property type="entry name" value="Ribosomal_S6_plastid/chlpt"/>
</dbReference>
<dbReference type="InterPro" id="IPR014717">
    <property type="entry name" value="Transl_elong_EF1B/ribsomal_bS6"/>
</dbReference>
<dbReference type="NCBIfam" id="TIGR00166">
    <property type="entry name" value="S6"/>
    <property type="match status" value="1"/>
</dbReference>
<dbReference type="PANTHER" id="PTHR21011">
    <property type="entry name" value="MITOCHONDRIAL 28S RIBOSOMAL PROTEIN S6"/>
    <property type="match status" value="1"/>
</dbReference>
<dbReference type="PANTHER" id="PTHR21011:SF1">
    <property type="entry name" value="SMALL RIBOSOMAL SUBUNIT PROTEIN BS6M"/>
    <property type="match status" value="1"/>
</dbReference>
<dbReference type="Pfam" id="PF01250">
    <property type="entry name" value="Ribosomal_S6"/>
    <property type="match status" value="1"/>
</dbReference>
<dbReference type="SUPFAM" id="SSF54995">
    <property type="entry name" value="Ribosomal protein S6"/>
    <property type="match status" value="1"/>
</dbReference>
<protein>
    <recommendedName>
        <fullName evidence="1">Small ribosomal subunit protein bS6</fullName>
    </recommendedName>
    <alternativeName>
        <fullName evidence="2">30S ribosomal protein S6</fullName>
    </alternativeName>
</protein>
<proteinExistence type="inferred from homology"/>
<accession>Q164N7</accession>
<keyword id="KW-1185">Reference proteome</keyword>
<keyword id="KW-0687">Ribonucleoprotein</keyword>
<keyword id="KW-0689">Ribosomal protein</keyword>
<keyword id="KW-0694">RNA-binding</keyword>
<keyword id="KW-0699">rRNA-binding</keyword>
<evidence type="ECO:0000255" key="1">
    <source>
        <dbReference type="HAMAP-Rule" id="MF_00360"/>
    </source>
</evidence>
<evidence type="ECO:0000305" key="2"/>
<reference key="1">
    <citation type="journal article" date="2007" name="J. Bacteriol.">
        <title>The complete genome sequence of Roseobacter denitrificans reveals a mixotrophic rather than photosynthetic metabolism.</title>
        <authorList>
            <person name="Swingley W.D."/>
            <person name="Sadekar S."/>
            <person name="Mastrian S.D."/>
            <person name="Matthies H.J."/>
            <person name="Hao J."/>
            <person name="Ramos H."/>
            <person name="Acharya C.R."/>
            <person name="Conrad A.L."/>
            <person name="Taylor H.L."/>
            <person name="Dejesa L.C."/>
            <person name="Shah M.K."/>
            <person name="O'Huallachain M.E."/>
            <person name="Lince M.T."/>
            <person name="Blankenship R.E."/>
            <person name="Beatty J.T."/>
            <person name="Touchman J.W."/>
        </authorList>
    </citation>
    <scope>NUCLEOTIDE SEQUENCE [LARGE SCALE GENOMIC DNA]</scope>
    <source>
        <strain>ATCC 33942 / OCh 114</strain>
    </source>
</reference>
<gene>
    <name evidence="1" type="primary">rpsF</name>
    <name type="ordered locus">RD1_3043</name>
</gene>
<name>RS6_ROSDO</name>
<sequence>MPLYEHVMIARQDLSNTQAEGLIEHFGTVLSDNGGKLVDHEYWGVKTMAYKINKNRKGHYAFLRSDAPAPAVHEMERLMRLHDDVMRVLTIKVDEHAELPSVQMQKREERGDRRERR</sequence>
<feature type="chain" id="PRO_1000005339" description="Small ribosomal subunit protein bS6">
    <location>
        <begin position="1"/>
        <end position="117"/>
    </location>
</feature>
<comment type="function">
    <text evidence="1">Binds together with bS18 to 16S ribosomal RNA.</text>
</comment>
<comment type="similarity">
    <text evidence="1">Belongs to the bacterial ribosomal protein bS6 family.</text>
</comment>
<organism>
    <name type="scientific">Roseobacter denitrificans (strain ATCC 33942 / OCh 114)</name>
    <name type="common">Erythrobacter sp. (strain OCh 114)</name>
    <name type="synonym">Roseobacter denitrificans</name>
    <dbReference type="NCBI Taxonomy" id="375451"/>
    <lineage>
        <taxon>Bacteria</taxon>
        <taxon>Pseudomonadati</taxon>
        <taxon>Pseudomonadota</taxon>
        <taxon>Alphaproteobacteria</taxon>
        <taxon>Rhodobacterales</taxon>
        <taxon>Roseobacteraceae</taxon>
        <taxon>Roseobacter</taxon>
    </lineage>
</organism>